<sequence>MFLVYFNTFLIIILLFGIIGIYILTFVFNIDFLINNNKIYILSYNATNINNINNLNLYDYSDIIFLTNFNINNNLLVTQANNLQDIPIFNVNNIISNQYNFYSASSNNVNILLGLRKTLNINRNPFLLFRNTSLAIVFNNNETFHCYISSNQNSDVLDIVSHIEFMKSRYNKYVIIGEIPVNNNISINNILNNFAIITNVRLIDKYNSIISFLNINVGTLFVINP</sequence>
<keyword id="KW-1185">Reference proteome</keyword>
<organism>
    <name type="scientific">Amsacta moorei entomopoxvirus</name>
    <name type="common">AmEPV</name>
    <dbReference type="NCBI Taxonomy" id="28321"/>
    <lineage>
        <taxon>Viruses</taxon>
        <taxon>Varidnaviria</taxon>
        <taxon>Bamfordvirae</taxon>
        <taxon>Nucleocytoviricota</taxon>
        <taxon>Pokkesviricetes</taxon>
        <taxon>Chitovirales</taxon>
        <taxon>Poxviridae</taxon>
        <taxon>Entomopoxvirinae</taxon>
        <taxon>Betaentomopoxvirus</taxon>
    </lineage>
</organism>
<feature type="chain" id="PRO_0000099762" description="Uncharacterized protein AMV183/G2R">
    <location>
        <begin position="1"/>
        <end position="225"/>
    </location>
</feature>
<organismHost>
    <name type="scientific">Amsacta</name>
    <dbReference type="NCBI Taxonomy" id="340055"/>
</organismHost>
<proteinExistence type="predicted"/>
<reference key="1">
    <citation type="journal article" date="1991" name="J. Virol.">
        <title>Identification, cloning, and sequencing of a fragment of Amsacta moorei entomopoxvirus DNA containing the spheroidin gene and three vaccinia virus-related open reading frames.</title>
        <authorList>
            <person name="Hall R.L."/>
            <person name="Moyer R.W."/>
        </authorList>
    </citation>
    <scope>NUCLEOTIDE SEQUENCE [GENOMIC DNA]</scope>
</reference>
<reference key="2">
    <citation type="journal article" date="2000" name="Virology">
        <title>Complete genomic sequence of the Amsacta moorei entomopoxvirus: analysis and comparison with other poxviruses.</title>
        <authorList>
            <person name="Bawden A.L."/>
            <person name="Glassberg K.J."/>
            <person name="Diggans J."/>
            <person name="Shaw R."/>
            <person name="Farmerie W."/>
            <person name="Moyer R.W."/>
        </authorList>
    </citation>
    <scope>NUCLEOTIDE SEQUENCE [LARGE SCALE GENOMIC DNA]</scope>
</reference>
<protein>
    <recommendedName>
        <fullName>Uncharacterized protein AMV183/G2R</fullName>
    </recommendedName>
</protein>
<dbReference type="EMBL" id="M77182">
    <property type="protein sequence ID" value="AAA42380.1"/>
    <property type="molecule type" value="Genomic_DNA"/>
</dbReference>
<dbReference type="EMBL" id="AF250284">
    <property type="protein sequence ID" value="AAG02889.1"/>
    <property type="molecule type" value="Genomic_DNA"/>
</dbReference>
<dbReference type="PIR" id="B41561">
    <property type="entry name" value="WZVZG2"/>
</dbReference>
<dbReference type="RefSeq" id="NP_064965.1">
    <property type="nucleotide sequence ID" value="NC_002520.1"/>
</dbReference>
<dbReference type="GeneID" id="1494773"/>
<dbReference type="KEGG" id="vg:1494773"/>
<dbReference type="OrthoDB" id="23182at10239"/>
<dbReference type="Proteomes" id="UP000000872">
    <property type="component" value="Genome"/>
</dbReference>
<name>V183_AMEPV</name>
<accession>P29818</accession>
<gene>
    <name type="ordered locus">AMV183</name>
    <name type="ORF">G2</name>
</gene>